<evidence type="ECO:0000250" key="1">
    <source>
        <dbReference type="UniProtKB" id="P0AAI5"/>
    </source>
</evidence>
<evidence type="ECO:0000255" key="2">
    <source>
        <dbReference type="PROSITE-ProRule" id="PRU01348"/>
    </source>
</evidence>
<evidence type="ECO:0000305" key="3"/>
<evidence type="ECO:0007744" key="4">
    <source>
        <dbReference type="PDB" id="2GQD"/>
    </source>
</evidence>
<evidence type="ECO:0007829" key="5">
    <source>
        <dbReference type="PDB" id="2GQD"/>
    </source>
</evidence>
<comment type="function">
    <text evidence="1">Involved in the type II fatty acid elongation cycle. Catalyzes the elongation of a wide range of acyl-ACP by the addition of two carbons from malonyl-ACP to an acyl acceptor. Can efficiently catalyze the conversion of palmitoleoyl-ACP (cis-hexadec-9-enoyl-ACP) to cis-vaccenoyl-ACP (cis-octadec-11-enoyl-ACP), an essential step in the thermal regulation of fatty acid composition.</text>
</comment>
<comment type="catalytic activity">
    <reaction evidence="1">
        <text>a fatty acyl-[ACP] + malonyl-[ACP] + H(+) = a 3-oxoacyl-[ACP] + holo-[ACP] + CO2</text>
        <dbReference type="Rhea" id="RHEA:22836"/>
        <dbReference type="Rhea" id="RHEA-COMP:9623"/>
        <dbReference type="Rhea" id="RHEA-COMP:9685"/>
        <dbReference type="Rhea" id="RHEA-COMP:9916"/>
        <dbReference type="Rhea" id="RHEA-COMP:14125"/>
        <dbReference type="ChEBI" id="CHEBI:15378"/>
        <dbReference type="ChEBI" id="CHEBI:16526"/>
        <dbReference type="ChEBI" id="CHEBI:64479"/>
        <dbReference type="ChEBI" id="CHEBI:78449"/>
        <dbReference type="ChEBI" id="CHEBI:78776"/>
        <dbReference type="ChEBI" id="CHEBI:138651"/>
    </reaction>
</comment>
<comment type="catalytic activity">
    <reaction evidence="1">
        <text>(9Z)-hexadecenoyl-[ACP] + malonyl-[ACP] + H(+) = 3-oxo-(11Z)-octadecenoyl-[ACP] + holo-[ACP] + CO2</text>
        <dbReference type="Rhea" id="RHEA:55040"/>
        <dbReference type="Rhea" id="RHEA-COMP:9623"/>
        <dbReference type="Rhea" id="RHEA-COMP:9685"/>
        <dbReference type="Rhea" id="RHEA-COMP:10800"/>
        <dbReference type="Rhea" id="RHEA-COMP:14074"/>
        <dbReference type="ChEBI" id="CHEBI:15378"/>
        <dbReference type="ChEBI" id="CHEBI:16526"/>
        <dbReference type="ChEBI" id="CHEBI:64479"/>
        <dbReference type="ChEBI" id="CHEBI:78449"/>
        <dbReference type="ChEBI" id="CHEBI:83989"/>
        <dbReference type="ChEBI" id="CHEBI:138538"/>
        <dbReference type="EC" id="2.3.1.179"/>
    </reaction>
</comment>
<comment type="pathway">
    <text evidence="1">Lipid metabolism; fatty acid biosynthesis.</text>
</comment>
<comment type="similarity">
    <text evidence="3">Belongs to the thiolase-like superfamily. Beta-ketoacyl-ACP synthases family.</text>
</comment>
<sequence length="414" mass="43739">MSQNKRVVITGMGALSPIGNDVKTTWENALKGVNGIDKITRIDTEPYSVHLAGELKNFNIEDHIDKKEARRMDRFTQYAIVAAREAVKDAQLDINENTADRIGVWIGSGIGGMETFEIAHKQLMDKGPRRVSPFFVPMLIPDMATGQVSIDLGAKGPNGATVTACATGTNSIGEAFKIVQRGDADAMITGGTEAPITHMAIAGFSASRALSTNDDIETACRPFQEGRDGFVMGEGAGILVIESLESAQARGANIYAEIVGYGTTGDAYHITAPAPEGEGGSRAMQAAMDDAGIEPKDVQYLNAHGTSTPVGDLNEVKAIKNTFGEAAKHLKVSSTKSMTGHLLGATGGIEAIFSALSIKDSKVAPTIHAVTPDPECDLDIVPNEAQDLDITYAMSNSLGFGGHNAVLVFKKFEA</sequence>
<organism>
    <name type="scientific">Staphylococcus aureus (strain MW2)</name>
    <dbReference type="NCBI Taxonomy" id="196620"/>
    <lineage>
        <taxon>Bacteria</taxon>
        <taxon>Bacillati</taxon>
        <taxon>Bacillota</taxon>
        <taxon>Bacilli</taxon>
        <taxon>Bacillales</taxon>
        <taxon>Staphylococcaceae</taxon>
        <taxon>Staphylococcus</taxon>
    </lineage>
</organism>
<keyword id="KW-0002">3D-structure</keyword>
<keyword id="KW-0012">Acyltransferase</keyword>
<keyword id="KW-0275">Fatty acid biosynthesis</keyword>
<keyword id="KW-0276">Fatty acid metabolism</keyword>
<keyword id="KW-0444">Lipid biosynthesis</keyword>
<keyword id="KW-0443">Lipid metabolism</keyword>
<keyword id="KW-0808">Transferase</keyword>
<name>FABF_STAAW</name>
<gene>
    <name type="primary">fabF</name>
    <name type="ordered locus">MW0866</name>
</gene>
<accession>Q8NXE1</accession>
<feature type="chain" id="PRO_0000180325" description="3-oxoacyl-[acyl-carrier-protein] synthase 2">
    <location>
        <begin position="1"/>
        <end position="414"/>
    </location>
</feature>
<feature type="domain" description="Ketosynthase family 3 (KS3)" evidence="2">
    <location>
        <begin position="4"/>
        <end position="411"/>
    </location>
</feature>
<feature type="active site" description="For beta-ketoacyl synthase activity" evidence="2">
    <location>
        <position position="165"/>
    </location>
</feature>
<feature type="active site" description="For beta-ketoacyl synthase activity" evidence="2">
    <location>
        <position position="304"/>
    </location>
</feature>
<feature type="active site" description="For beta-ketoacyl synthase activity" evidence="2">
    <location>
        <position position="341"/>
    </location>
</feature>
<feature type="strand" evidence="5">
    <location>
        <begin position="7"/>
        <end position="16"/>
    </location>
</feature>
<feature type="strand" evidence="5">
    <location>
        <begin position="19"/>
        <end position="21"/>
    </location>
</feature>
<feature type="helix" evidence="5">
    <location>
        <begin position="22"/>
        <end position="30"/>
    </location>
</feature>
<feature type="strand" evidence="5">
    <location>
        <begin position="36"/>
        <end position="38"/>
    </location>
</feature>
<feature type="strand" evidence="5">
    <location>
        <begin position="51"/>
        <end position="53"/>
    </location>
</feature>
<feature type="helix" evidence="5">
    <location>
        <begin position="60"/>
        <end position="62"/>
    </location>
</feature>
<feature type="turn" evidence="5">
    <location>
        <begin position="67"/>
        <end position="71"/>
    </location>
</feature>
<feature type="helix" evidence="5">
    <location>
        <begin position="74"/>
        <end position="90"/>
    </location>
</feature>
<feature type="turn" evidence="5">
    <location>
        <begin position="96"/>
        <end position="98"/>
    </location>
</feature>
<feature type="helix" evidence="5">
    <location>
        <begin position="99"/>
        <end position="101"/>
    </location>
</feature>
<feature type="strand" evidence="5">
    <location>
        <begin position="102"/>
        <end position="107"/>
    </location>
</feature>
<feature type="helix" evidence="5">
    <location>
        <begin position="113"/>
        <end position="126"/>
    </location>
</feature>
<feature type="helix" evidence="5">
    <location>
        <begin position="128"/>
        <end position="130"/>
    </location>
</feature>
<feature type="helix" evidence="5">
    <location>
        <begin position="135"/>
        <end position="139"/>
    </location>
</feature>
<feature type="helix" evidence="5">
    <location>
        <begin position="143"/>
        <end position="152"/>
    </location>
</feature>
<feature type="strand" evidence="5">
    <location>
        <begin position="156"/>
        <end position="159"/>
    </location>
</feature>
<feature type="helix" evidence="5">
    <location>
        <begin position="164"/>
        <end position="166"/>
    </location>
</feature>
<feature type="helix" evidence="5">
    <location>
        <begin position="167"/>
        <end position="180"/>
    </location>
</feature>
<feature type="strand" evidence="5">
    <location>
        <begin position="185"/>
        <end position="193"/>
    </location>
</feature>
<feature type="helix" evidence="5">
    <location>
        <begin position="198"/>
        <end position="206"/>
    </location>
</feature>
<feature type="turn" evidence="5">
    <location>
        <begin position="216"/>
        <end position="218"/>
    </location>
</feature>
<feature type="strand" evidence="5">
    <location>
        <begin position="235"/>
        <end position="243"/>
    </location>
</feature>
<feature type="helix" evidence="5">
    <location>
        <begin position="244"/>
        <end position="250"/>
    </location>
</feature>
<feature type="strand" evidence="5">
    <location>
        <begin position="256"/>
        <end position="265"/>
    </location>
</feature>
<feature type="strand" evidence="5">
    <location>
        <begin position="270"/>
        <end position="272"/>
    </location>
</feature>
<feature type="helix" evidence="5">
    <location>
        <begin position="275"/>
        <end position="277"/>
    </location>
</feature>
<feature type="helix" evidence="5">
    <location>
        <begin position="278"/>
        <end position="291"/>
    </location>
</feature>
<feature type="helix" evidence="5">
    <location>
        <begin position="295"/>
        <end position="297"/>
    </location>
</feature>
<feature type="strand" evidence="5">
    <location>
        <begin position="300"/>
        <end position="302"/>
    </location>
</feature>
<feature type="helix" evidence="5">
    <location>
        <begin position="309"/>
        <end position="323"/>
    </location>
</feature>
<feature type="helix" evidence="5">
    <location>
        <begin position="324"/>
        <end position="327"/>
    </location>
</feature>
<feature type="strand" evidence="5">
    <location>
        <begin position="331"/>
        <end position="333"/>
    </location>
</feature>
<feature type="helix" evidence="5">
    <location>
        <begin position="336"/>
        <end position="339"/>
    </location>
</feature>
<feature type="helix" evidence="5">
    <location>
        <begin position="343"/>
        <end position="345"/>
    </location>
</feature>
<feature type="helix" evidence="5">
    <location>
        <begin position="346"/>
        <end position="360"/>
    </location>
</feature>
<feature type="strand" evidence="5">
    <location>
        <begin position="382"/>
        <end position="384"/>
    </location>
</feature>
<feature type="strand" evidence="5">
    <location>
        <begin position="391"/>
        <end position="398"/>
    </location>
</feature>
<feature type="helix" evidence="5">
    <location>
        <begin position="400"/>
        <end position="402"/>
    </location>
</feature>
<feature type="strand" evidence="5">
    <location>
        <begin position="403"/>
        <end position="410"/>
    </location>
</feature>
<proteinExistence type="evidence at protein level"/>
<reference key="1">
    <citation type="journal article" date="2002" name="Lancet">
        <title>Genome and virulence determinants of high virulence community-acquired MRSA.</title>
        <authorList>
            <person name="Baba T."/>
            <person name="Takeuchi F."/>
            <person name="Kuroda M."/>
            <person name="Yuzawa H."/>
            <person name="Aoki K."/>
            <person name="Oguchi A."/>
            <person name="Nagai Y."/>
            <person name="Iwama N."/>
            <person name="Asano K."/>
            <person name="Naimi T."/>
            <person name="Kuroda H."/>
            <person name="Cui L."/>
            <person name="Yamamoto K."/>
            <person name="Hiramatsu K."/>
        </authorList>
    </citation>
    <scope>NUCLEOTIDE SEQUENCE [LARGE SCALE GENOMIC DNA]</scope>
    <source>
        <strain>MW2</strain>
    </source>
</reference>
<reference evidence="4" key="2">
    <citation type="submission" date="2006-04" db="PDB data bank">
        <title>The crystal structure of B-ketoacyl-ACP synthase II (FabF) from Staphylococcus aureus.</title>
        <authorList>
            <person name="Miller D.J."/>
            <person name="Zhang Y.M."/>
            <person name="Rock C.O."/>
            <person name="White S.W."/>
        </authorList>
    </citation>
    <scope>X-RAY CRYSTALLOGRAPHY (2.30 ANGSTROMS)</scope>
</reference>
<dbReference type="EC" id="2.3.1.179" evidence="1"/>
<dbReference type="EMBL" id="BA000033">
    <property type="protein sequence ID" value="BAB94731.1"/>
    <property type="molecule type" value="Genomic_DNA"/>
</dbReference>
<dbReference type="RefSeq" id="WP_000081240.1">
    <property type="nucleotide sequence ID" value="NC_003923.1"/>
</dbReference>
<dbReference type="PDB" id="2GQD">
    <property type="method" value="X-ray"/>
    <property type="resolution" value="2.30 A"/>
    <property type="chains" value="A/B=1-414"/>
</dbReference>
<dbReference type="PDBsum" id="2GQD"/>
<dbReference type="SMR" id="Q8NXE1"/>
<dbReference type="KEGG" id="sam:MW0866"/>
<dbReference type="HOGENOM" id="CLU_000022_69_2_9"/>
<dbReference type="UniPathway" id="UPA00094"/>
<dbReference type="EvolutionaryTrace" id="Q8NXE1"/>
<dbReference type="GO" id="GO:0005829">
    <property type="term" value="C:cytosol"/>
    <property type="evidence" value="ECO:0007669"/>
    <property type="project" value="TreeGrafter"/>
</dbReference>
<dbReference type="GO" id="GO:0004315">
    <property type="term" value="F:3-oxoacyl-[acyl-carrier-protein] synthase activity"/>
    <property type="evidence" value="ECO:0007669"/>
    <property type="project" value="UniProtKB-EC"/>
</dbReference>
<dbReference type="GO" id="GO:0006633">
    <property type="term" value="P:fatty acid biosynthetic process"/>
    <property type="evidence" value="ECO:0007669"/>
    <property type="project" value="UniProtKB-UniPathway"/>
</dbReference>
<dbReference type="CDD" id="cd00834">
    <property type="entry name" value="KAS_I_II"/>
    <property type="match status" value="1"/>
</dbReference>
<dbReference type="FunFam" id="3.40.47.10:FF:000026">
    <property type="entry name" value="3-oxoacyl-[acyl-carrier-protein] synthase 2"/>
    <property type="match status" value="1"/>
</dbReference>
<dbReference type="Gene3D" id="3.40.47.10">
    <property type="match status" value="1"/>
</dbReference>
<dbReference type="InterPro" id="IPR017568">
    <property type="entry name" value="3-oxoacyl-ACP_synth-2"/>
</dbReference>
<dbReference type="InterPro" id="IPR000794">
    <property type="entry name" value="Beta-ketoacyl_synthase"/>
</dbReference>
<dbReference type="InterPro" id="IPR018201">
    <property type="entry name" value="Ketoacyl_synth_AS"/>
</dbReference>
<dbReference type="InterPro" id="IPR014031">
    <property type="entry name" value="Ketoacyl_synth_C"/>
</dbReference>
<dbReference type="InterPro" id="IPR014030">
    <property type="entry name" value="Ketoacyl_synth_N"/>
</dbReference>
<dbReference type="InterPro" id="IPR020841">
    <property type="entry name" value="PKS_Beta-ketoAc_synthase_dom"/>
</dbReference>
<dbReference type="InterPro" id="IPR016039">
    <property type="entry name" value="Thiolase-like"/>
</dbReference>
<dbReference type="NCBIfam" id="TIGR03150">
    <property type="entry name" value="fabF"/>
    <property type="match status" value="1"/>
</dbReference>
<dbReference type="NCBIfam" id="NF004970">
    <property type="entry name" value="PRK06333.1"/>
    <property type="match status" value="1"/>
</dbReference>
<dbReference type="NCBIfam" id="NF005589">
    <property type="entry name" value="PRK07314.1"/>
    <property type="match status" value="1"/>
</dbReference>
<dbReference type="PANTHER" id="PTHR11712:SF336">
    <property type="entry name" value="3-OXOACYL-[ACYL-CARRIER-PROTEIN] SYNTHASE, MITOCHONDRIAL"/>
    <property type="match status" value="1"/>
</dbReference>
<dbReference type="PANTHER" id="PTHR11712">
    <property type="entry name" value="POLYKETIDE SYNTHASE-RELATED"/>
    <property type="match status" value="1"/>
</dbReference>
<dbReference type="Pfam" id="PF00109">
    <property type="entry name" value="ketoacyl-synt"/>
    <property type="match status" value="1"/>
</dbReference>
<dbReference type="Pfam" id="PF02801">
    <property type="entry name" value="Ketoacyl-synt_C"/>
    <property type="match status" value="1"/>
</dbReference>
<dbReference type="PIRSF" id="PIRSF000447">
    <property type="entry name" value="KAS_II"/>
    <property type="match status" value="1"/>
</dbReference>
<dbReference type="SMART" id="SM00825">
    <property type="entry name" value="PKS_KS"/>
    <property type="match status" value="1"/>
</dbReference>
<dbReference type="SUPFAM" id="SSF53901">
    <property type="entry name" value="Thiolase-like"/>
    <property type="match status" value="2"/>
</dbReference>
<dbReference type="PROSITE" id="PS00606">
    <property type="entry name" value="KS3_1"/>
    <property type="match status" value="1"/>
</dbReference>
<dbReference type="PROSITE" id="PS52004">
    <property type="entry name" value="KS3_2"/>
    <property type="match status" value="1"/>
</dbReference>
<protein>
    <recommendedName>
        <fullName>3-oxoacyl-[acyl-carrier-protein] synthase 2</fullName>
        <ecNumber evidence="1">2.3.1.179</ecNumber>
    </recommendedName>
    <alternativeName>
        <fullName>3-oxoacyl-[acyl-carrier-protein] synthase II</fullName>
    </alternativeName>
    <alternativeName>
        <fullName>Beta-ketoacyl-ACP synthase II</fullName>
        <shortName>KAS II</shortName>
    </alternativeName>
</protein>